<reference key="1">
    <citation type="journal article" date="2003" name="Am. J. Phys. Anthropol.">
        <title>Evolution of a pigmentation gene, the melanocortin-1 receptor, in primates.</title>
        <authorList>
            <person name="Mundy N.I."/>
            <person name="Kelly J."/>
        </authorList>
    </citation>
    <scope>NUCLEOTIDE SEQUENCE [GENOMIC DNA]</scope>
    <source>
        <strain>Isolate 20</strain>
    </source>
</reference>
<gene>
    <name type="primary">MC1R</name>
</gene>
<keyword id="KW-1003">Cell membrane</keyword>
<keyword id="KW-0297">G-protein coupled receptor</keyword>
<keyword id="KW-0325">Glycoprotein</keyword>
<keyword id="KW-0449">Lipoprotein</keyword>
<keyword id="KW-0472">Membrane</keyword>
<keyword id="KW-0564">Palmitate</keyword>
<keyword id="KW-0675">Receptor</keyword>
<keyword id="KW-0807">Transducer</keyword>
<keyword id="KW-0812">Transmembrane</keyword>
<keyword id="KW-1133">Transmembrane helix</keyword>
<feature type="chain" id="PRO_0000069796" description="Melanocyte-stimulating hormone receptor">
    <location>
        <begin position="1"/>
        <end position="344"/>
    </location>
</feature>
<feature type="topological domain" description="Extracellular" evidence="2">
    <location>
        <begin position="1"/>
        <end position="37"/>
    </location>
</feature>
<feature type="transmembrane region" description="Helical; Name=1" evidence="2">
    <location>
        <begin position="38"/>
        <end position="63"/>
    </location>
</feature>
<feature type="topological domain" description="Cytoplasmic" evidence="2">
    <location>
        <begin position="64"/>
        <end position="72"/>
    </location>
</feature>
<feature type="transmembrane region" description="Helical; Name=2" evidence="2">
    <location>
        <begin position="73"/>
        <end position="93"/>
    </location>
</feature>
<feature type="topological domain" description="Extracellular" evidence="2">
    <location>
        <begin position="94"/>
        <end position="118"/>
    </location>
</feature>
<feature type="transmembrane region" description="Helical; Name=3" evidence="2">
    <location>
        <begin position="119"/>
        <end position="140"/>
    </location>
</feature>
<feature type="topological domain" description="Cytoplasmic" evidence="2">
    <location>
        <begin position="141"/>
        <end position="163"/>
    </location>
</feature>
<feature type="transmembrane region" description="Helical; Name=4" evidence="2">
    <location>
        <begin position="164"/>
        <end position="183"/>
    </location>
</feature>
<feature type="topological domain" description="Extracellular" evidence="2">
    <location>
        <begin position="184"/>
        <end position="191"/>
    </location>
</feature>
<feature type="transmembrane region" description="Helical; Name=5" evidence="2">
    <location>
        <begin position="192"/>
        <end position="211"/>
    </location>
</feature>
<feature type="topological domain" description="Cytoplasmic" evidence="2">
    <location>
        <begin position="212"/>
        <end position="240"/>
    </location>
</feature>
<feature type="transmembrane region" description="Helical; Name=6" evidence="2">
    <location>
        <begin position="241"/>
        <end position="266"/>
    </location>
</feature>
<feature type="topological domain" description="Extracellular" evidence="2">
    <location>
        <begin position="267"/>
        <end position="279"/>
    </location>
</feature>
<feature type="transmembrane region" description="Helical; Name=7" evidence="2">
    <location>
        <begin position="280"/>
        <end position="300"/>
    </location>
</feature>
<feature type="topological domain" description="Cytoplasmic" evidence="2">
    <location>
        <begin position="301"/>
        <end position="344"/>
    </location>
</feature>
<feature type="lipid moiety-binding region" description="S-palmitoyl cysteine" evidence="2">
    <location>
        <position position="315"/>
    </location>
</feature>
<feature type="glycosylation site" description="N-linked (GlcNAc...) asparagine" evidence="2">
    <location>
        <position position="29"/>
    </location>
</feature>
<accession>Q864H6</accession>
<protein>
    <recommendedName>
        <fullName>Melanocyte-stimulating hormone receptor</fullName>
        <shortName>MSH-R</shortName>
    </recommendedName>
    <alternativeName>
        <fullName>Melanocortin receptor 1</fullName>
        <shortName>MC1-R</shortName>
    </alternativeName>
</protein>
<proteinExistence type="inferred from homology"/>
<organism>
    <name type="scientific">Callimico goeldii</name>
    <name type="common">Goeldi's marmoset</name>
    <dbReference type="NCBI Taxonomy" id="9495"/>
    <lineage>
        <taxon>Eukaryota</taxon>
        <taxon>Metazoa</taxon>
        <taxon>Chordata</taxon>
        <taxon>Craniata</taxon>
        <taxon>Vertebrata</taxon>
        <taxon>Euteleostomi</taxon>
        <taxon>Mammalia</taxon>
        <taxon>Eutheria</taxon>
        <taxon>Euarchontoglires</taxon>
        <taxon>Primates</taxon>
        <taxon>Haplorrhini</taxon>
        <taxon>Platyrrhini</taxon>
        <taxon>Cebidae</taxon>
        <taxon>Callitrichinae</taxon>
        <taxon>Callimico</taxon>
    </lineage>
</organism>
<sequence length="344" mass="37583">MPMQGAQRKLLGSLNSTPTATSNLGLAANHTGAPCLEVPIPDGLFLSLGLVSLVENVLVVAAIAKNRNLHSSMYCFICCLAVSDLLVSGSNMLETAIILLLEAGALVTRASVVQQLHNTIDVLTCSSMLCSLCFLGAIAVDRYISIFYALRYHSIMTLPRAQRAIAAIWVASVLSSTLFITYYDHAAVLLCLVVFFLAMLVLMAVLYVHMLARACQHAQGIIRLHKRQPPAHKGFGLRGAATLTILLGIFFLCWGPFFLHLTLVVFCPQHMTCSCIFKNFKVFLTLIICNTIIDPLIYAFRSQELRRTLKEVLLCSRWPGCWAEGGGDSVWPGSCVTLRGPLPP</sequence>
<dbReference type="EMBL" id="AY205121">
    <property type="protein sequence ID" value="AAP30995.1"/>
    <property type="molecule type" value="Genomic_DNA"/>
</dbReference>
<dbReference type="SMR" id="Q864H6"/>
<dbReference type="GlyCosmos" id="Q864H6">
    <property type="glycosylation" value="1 site, No reported glycans"/>
</dbReference>
<dbReference type="GO" id="GO:0005886">
    <property type="term" value="C:plasma membrane"/>
    <property type="evidence" value="ECO:0000250"/>
    <property type="project" value="UniProtKB"/>
</dbReference>
<dbReference type="GO" id="GO:0004980">
    <property type="term" value="F:melanocyte-stimulating hormone receptor activity"/>
    <property type="evidence" value="ECO:0007669"/>
    <property type="project" value="InterPro"/>
</dbReference>
<dbReference type="GO" id="GO:0007189">
    <property type="term" value="P:adenylate cyclase-activating G protein-coupled receptor signaling pathway"/>
    <property type="evidence" value="ECO:0007669"/>
    <property type="project" value="UniProtKB-ARBA"/>
</dbReference>
<dbReference type="CDD" id="cd15351">
    <property type="entry name" value="7tmA_MC1R"/>
    <property type="match status" value="1"/>
</dbReference>
<dbReference type="FunFam" id="1.20.1070.10:FF:000211">
    <property type="entry name" value="Melanocyte-stimulating hormone receptor"/>
    <property type="match status" value="1"/>
</dbReference>
<dbReference type="Gene3D" id="1.20.1070.10">
    <property type="entry name" value="Rhodopsin 7-helix transmembrane proteins"/>
    <property type="match status" value="1"/>
</dbReference>
<dbReference type="InterPro" id="IPR000276">
    <property type="entry name" value="GPCR_Rhodpsn"/>
</dbReference>
<dbReference type="InterPro" id="IPR017452">
    <property type="entry name" value="GPCR_Rhodpsn_7TM"/>
</dbReference>
<dbReference type="InterPro" id="IPR001671">
    <property type="entry name" value="Melcrt_ACTH_rcpt"/>
</dbReference>
<dbReference type="InterPro" id="IPR000761">
    <property type="entry name" value="MSH_rcpt"/>
</dbReference>
<dbReference type="PANTHER" id="PTHR22750">
    <property type="entry name" value="G-PROTEIN COUPLED RECEPTOR"/>
    <property type="match status" value="1"/>
</dbReference>
<dbReference type="Pfam" id="PF00001">
    <property type="entry name" value="7tm_1"/>
    <property type="match status" value="2"/>
</dbReference>
<dbReference type="PRINTS" id="PR00237">
    <property type="entry name" value="GPCRRHODOPSN"/>
</dbReference>
<dbReference type="PRINTS" id="PR00534">
    <property type="entry name" value="MCRFAMILY"/>
</dbReference>
<dbReference type="PRINTS" id="PR00536">
    <property type="entry name" value="MELNOCYTESHR"/>
</dbReference>
<dbReference type="SMART" id="SM01381">
    <property type="entry name" value="7TM_GPCR_Srsx"/>
    <property type="match status" value="1"/>
</dbReference>
<dbReference type="SUPFAM" id="SSF81321">
    <property type="entry name" value="Family A G protein-coupled receptor-like"/>
    <property type="match status" value="1"/>
</dbReference>
<dbReference type="PROSITE" id="PS00237">
    <property type="entry name" value="G_PROTEIN_RECEP_F1_1"/>
    <property type="match status" value="1"/>
</dbReference>
<dbReference type="PROSITE" id="PS50262">
    <property type="entry name" value="G_PROTEIN_RECEP_F1_2"/>
    <property type="match status" value="1"/>
</dbReference>
<evidence type="ECO:0000250" key="1">
    <source>
        <dbReference type="UniProtKB" id="Q01726"/>
    </source>
</evidence>
<evidence type="ECO:0000255" key="2"/>
<evidence type="ECO:0000255" key="3">
    <source>
        <dbReference type="PROSITE-ProRule" id="PRU00521"/>
    </source>
</evidence>
<comment type="function">
    <text evidence="1">Receptor for MSH (alpha, beta and gamma) and ACTH. The activity of this receptor is mediated by G proteins which activate adenylate cyclase. Mediates melanogenesis, the production of eumelanin (black/brown) and phaeomelanin (red/yellow), via regulation of cAMP signaling in melanocytes.</text>
</comment>
<comment type="subunit">
    <text evidence="1">Interacts with MGRN1, but does not undergo MGRN1-mediated ubiquitination; this interaction competes with GNAS-binding and thus inhibits agonist-induced cAMP production. Interacts with OPN3; the interaction results in a decrease in MC1R-mediated cAMP signaling and ultimately a decrease in melanin production in melanocytes.</text>
</comment>
<comment type="subcellular location">
    <subcellularLocation>
        <location evidence="1">Cell membrane</location>
        <topology evidence="2">Multi-pass membrane protein</topology>
    </subcellularLocation>
</comment>
<comment type="similarity">
    <text evidence="3">Belongs to the G-protein coupled receptor 1 family.</text>
</comment>
<name>MSHR_CALGO</name>